<keyword id="KW-0150">Chloroplast</keyword>
<keyword id="KW-0251">Elongation factor</keyword>
<keyword id="KW-0934">Plastid</keyword>
<keyword id="KW-0648">Protein biosynthesis</keyword>
<protein>
    <recommendedName>
        <fullName>Elongation factor Ts, chloroplastic</fullName>
        <shortName evidence="1">EF-Ts</shortName>
    </recommendedName>
</protein>
<comment type="function">
    <text evidence="1">Associates with the EF-Tu.GDP complex and induces the exchange of GDP to GTP. It remains bound to the aminoacyl-tRNA.EF-Tu.GTP complex up to the GTP hydrolysis stage on the ribosome.</text>
</comment>
<comment type="subcellular location">
    <subcellularLocation>
        <location>Plastid</location>
        <location>Chloroplast</location>
    </subcellularLocation>
</comment>
<comment type="similarity">
    <text evidence="1">Belongs to the EF-Ts family.</text>
</comment>
<gene>
    <name type="primary">tsf</name>
</gene>
<accession>A6MVX0</accession>
<dbReference type="EMBL" id="EF508371">
    <property type="protein sequence ID" value="ABO70815.1"/>
    <property type="molecule type" value="Genomic_DNA"/>
</dbReference>
<dbReference type="RefSeq" id="YP_001293549.1">
    <property type="nucleotide sequence ID" value="NC_009573.1"/>
</dbReference>
<dbReference type="SMR" id="A6MVX0"/>
<dbReference type="GeneID" id="5228566"/>
<dbReference type="GO" id="GO:0009507">
    <property type="term" value="C:chloroplast"/>
    <property type="evidence" value="ECO:0007669"/>
    <property type="project" value="UniProtKB-SubCell"/>
</dbReference>
<dbReference type="GO" id="GO:0005739">
    <property type="term" value="C:mitochondrion"/>
    <property type="evidence" value="ECO:0007669"/>
    <property type="project" value="UniProtKB-UniRule"/>
</dbReference>
<dbReference type="GO" id="GO:0003746">
    <property type="term" value="F:translation elongation factor activity"/>
    <property type="evidence" value="ECO:0007669"/>
    <property type="project" value="UniProtKB-UniRule"/>
</dbReference>
<dbReference type="CDD" id="cd14275">
    <property type="entry name" value="UBA_EF-Ts"/>
    <property type="match status" value="1"/>
</dbReference>
<dbReference type="FunFam" id="1.10.286.20:FF:000001">
    <property type="entry name" value="Elongation factor Ts"/>
    <property type="match status" value="1"/>
</dbReference>
<dbReference type="FunFam" id="1.10.8.10:FF:000001">
    <property type="entry name" value="Elongation factor Ts"/>
    <property type="match status" value="1"/>
</dbReference>
<dbReference type="Gene3D" id="1.10.286.20">
    <property type="match status" value="1"/>
</dbReference>
<dbReference type="Gene3D" id="1.10.8.10">
    <property type="entry name" value="DNA helicase RuvA subunit, C-terminal domain"/>
    <property type="match status" value="1"/>
</dbReference>
<dbReference type="Gene3D" id="3.30.479.20">
    <property type="entry name" value="Elongation factor Ts, dimerisation domain"/>
    <property type="match status" value="1"/>
</dbReference>
<dbReference type="HAMAP" id="MF_00050">
    <property type="entry name" value="EF_Ts"/>
    <property type="match status" value="1"/>
</dbReference>
<dbReference type="InterPro" id="IPR036402">
    <property type="entry name" value="EF-Ts_dimer_sf"/>
</dbReference>
<dbReference type="InterPro" id="IPR001816">
    <property type="entry name" value="Transl_elong_EFTs/EF1B"/>
</dbReference>
<dbReference type="InterPro" id="IPR014039">
    <property type="entry name" value="Transl_elong_EFTs/EF1B_dimer"/>
</dbReference>
<dbReference type="InterPro" id="IPR018101">
    <property type="entry name" value="Transl_elong_Ts_CS"/>
</dbReference>
<dbReference type="InterPro" id="IPR009060">
    <property type="entry name" value="UBA-like_sf"/>
</dbReference>
<dbReference type="NCBIfam" id="TIGR00116">
    <property type="entry name" value="tsf"/>
    <property type="match status" value="1"/>
</dbReference>
<dbReference type="PANTHER" id="PTHR11741">
    <property type="entry name" value="ELONGATION FACTOR TS"/>
    <property type="match status" value="1"/>
</dbReference>
<dbReference type="PANTHER" id="PTHR11741:SF0">
    <property type="entry name" value="ELONGATION FACTOR TS, MITOCHONDRIAL"/>
    <property type="match status" value="1"/>
</dbReference>
<dbReference type="Pfam" id="PF00889">
    <property type="entry name" value="EF_TS"/>
    <property type="match status" value="1"/>
</dbReference>
<dbReference type="SUPFAM" id="SSF54713">
    <property type="entry name" value="Elongation factor Ts (EF-Ts), dimerisation domain"/>
    <property type="match status" value="1"/>
</dbReference>
<dbReference type="SUPFAM" id="SSF46934">
    <property type="entry name" value="UBA-like"/>
    <property type="match status" value="1"/>
</dbReference>
<dbReference type="PROSITE" id="PS01127">
    <property type="entry name" value="EF_TS_2"/>
    <property type="match status" value="1"/>
</dbReference>
<sequence length="219" mass="24989">MAAEISAKTVKELRDKTAAGMMDCKKALQESNGDFEQAMESLRKKGLASANKKSDRIATEGIIESYIHMGGKLGVLVEVNCETDFVARREEFQELAKNIAMQIAANPAVKFVSLKEIPQSIIDEEKKIELEKDDLSNKPQEIKEKIVEGRIQKRLNEMILLEQSFIRDSDITIEELVKRNIAILGENIQVRRFERFNLGEGLEKREDNFSEEVEKMKKK</sequence>
<organism>
    <name type="scientific">Rhodomonas salina</name>
    <name type="common">Cryptomonas salina</name>
    <dbReference type="NCBI Taxonomy" id="52970"/>
    <lineage>
        <taxon>Eukaryota</taxon>
        <taxon>Cryptophyceae</taxon>
        <taxon>Pyrenomonadales</taxon>
        <taxon>Pyrenomonadaceae</taxon>
        <taxon>Rhodomonas</taxon>
    </lineage>
</organism>
<feature type="chain" id="PRO_0000323474" description="Elongation factor Ts, chloroplastic">
    <location>
        <begin position="1"/>
        <end position="219"/>
    </location>
</feature>
<proteinExistence type="inferred from homology"/>
<reference key="1">
    <citation type="journal article" date="2007" name="Mol. Biol. Evol.">
        <title>Plastid genome sequence of the cryptophyte alga Rhodomonas salina CCMP1319: lateral transfer of putative DNA replication machinery and a test of chromist plastid phylogeny.</title>
        <authorList>
            <person name="Khan H."/>
            <person name="Parks N."/>
            <person name="Kozera C."/>
            <person name="Curtis B.A."/>
            <person name="Parsons B.J."/>
            <person name="Bowman S."/>
            <person name="Archibald J.M."/>
        </authorList>
    </citation>
    <scope>NUCLEOTIDE SEQUENCE [LARGE SCALE GENOMIC DNA]</scope>
    <source>
        <strain>CCMP1319 / NEPCC76 / CS-174</strain>
    </source>
</reference>
<evidence type="ECO:0000255" key="1">
    <source>
        <dbReference type="HAMAP-Rule" id="MF_03135"/>
    </source>
</evidence>
<geneLocation type="chloroplast"/>
<name>EFTS_RHDSA</name>